<dbReference type="EC" id="2.7.10.1"/>
<dbReference type="EMBL" id="U89295">
    <property type="protein sequence ID" value="AAC60220.1"/>
    <property type="molecule type" value="mRNA"/>
</dbReference>
<dbReference type="RefSeq" id="NP_571170.1">
    <property type="nucleotide sequence ID" value="NM_131095.1"/>
</dbReference>
<dbReference type="SMR" id="O13146"/>
<dbReference type="FunCoup" id="O13146">
    <property type="interactions" value="696"/>
</dbReference>
<dbReference type="IntAct" id="O13146">
    <property type="interactions" value="6"/>
</dbReference>
<dbReference type="STRING" id="7955.ENSDARP00000096552"/>
<dbReference type="GlyCosmos" id="O13146">
    <property type="glycosylation" value="4 sites, No reported glycans"/>
</dbReference>
<dbReference type="PaxDb" id="7955-ENSDARP00000096552"/>
<dbReference type="GeneID" id="30311"/>
<dbReference type="KEGG" id="dre:30311"/>
<dbReference type="AGR" id="ZFIN:ZDB-GENE-990415-58"/>
<dbReference type="CTD" id="30311"/>
<dbReference type="ZFIN" id="ZDB-GENE-990415-58">
    <property type="gene designation" value="ek1"/>
</dbReference>
<dbReference type="eggNOG" id="KOG0196">
    <property type="taxonomic scope" value="Eukaryota"/>
</dbReference>
<dbReference type="InParanoid" id="O13146"/>
<dbReference type="OrthoDB" id="4062651at2759"/>
<dbReference type="PhylomeDB" id="O13146"/>
<dbReference type="BRENDA" id="2.7.10.1">
    <property type="organism ID" value="928"/>
</dbReference>
<dbReference type="Reactome" id="R-DRE-2682334">
    <property type="pathway name" value="EPH-Ephrin signaling"/>
</dbReference>
<dbReference type="Reactome" id="R-DRE-3928663">
    <property type="pathway name" value="EPHA-mediated growth cone collapse"/>
</dbReference>
<dbReference type="Reactome" id="R-DRE-3928665">
    <property type="pathway name" value="EPH-ephrin mediated repulsion of cells"/>
</dbReference>
<dbReference type="PRO" id="PR:O13146"/>
<dbReference type="Proteomes" id="UP000000437">
    <property type="component" value="Alternate scaffold 24"/>
</dbReference>
<dbReference type="Proteomes" id="UP000000437">
    <property type="component" value="Chromosome 24"/>
</dbReference>
<dbReference type="GO" id="GO:0005769">
    <property type="term" value="C:early endosome"/>
    <property type="evidence" value="ECO:0000250"/>
    <property type="project" value="UniProtKB"/>
</dbReference>
<dbReference type="GO" id="GO:0005886">
    <property type="term" value="C:plasma membrane"/>
    <property type="evidence" value="ECO:0000250"/>
    <property type="project" value="UniProtKB"/>
</dbReference>
<dbReference type="GO" id="GO:0043235">
    <property type="term" value="C:receptor complex"/>
    <property type="evidence" value="ECO:0000318"/>
    <property type="project" value="GO_Central"/>
</dbReference>
<dbReference type="GO" id="GO:0005524">
    <property type="term" value="F:ATP binding"/>
    <property type="evidence" value="ECO:0007669"/>
    <property type="project" value="UniProtKB-KW"/>
</dbReference>
<dbReference type="GO" id="GO:0005004">
    <property type="term" value="F:GPI-linked ephrin receptor activity"/>
    <property type="evidence" value="ECO:0000250"/>
    <property type="project" value="UniProtKB"/>
</dbReference>
<dbReference type="GO" id="GO:0004714">
    <property type="term" value="F:transmembrane receptor protein tyrosine kinase activity"/>
    <property type="evidence" value="ECO:0000318"/>
    <property type="project" value="GO_Central"/>
</dbReference>
<dbReference type="GO" id="GO:0016477">
    <property type="term" value="P:cell migration"/>
    <property type="evidence" value="ECO:0000250"/>
    <property type="project" value="UniProtKB"/>
</dbReference>
<dbReference type="GO" id="GO:0007169">
    <property type="term" value="P:cell surface receptor protein tyrosine kinase signaling pathway"/>
    <property type="evidence" value="ECO:0000318"/>
    <property type="project" value="GO_Central"/>
</dbReference>
<dbReference type="GO" id="GO:0048013">
    <property type="term" value="P:ephrin receptor signaling pathway"/>
    <property type="evidence" value="ECO:0000250"/>
    <property type="project" value="UniProtKB"/>
</dbReference>
<dbReference type="GO" id="GO:0097156">
    <property type="term" value="P:fasciculation of motor neuron axon"/>
    <property type="evidence" value="ECO:0000250"/>
    <property type="project" value="UniProtKB"/>
</dbReference>
<dbReference type="GO" id="GO:0097155">
    <property type="term" value="P:fasciculation of sensory neuron axon"/>
    <property type="evidence" value="ECO:0000250"/>
    <property type="project" value="UniProtKB"/>
</dbReference>
<dbReference type="GO" id="GO:0032956">
    <property type="term" value="P:regulation of actin cytoskeleton organization"/>
    <property type="evidence" value="ECO:0000250"/>
    <property type="project" value="UniProtKB"/>
</dbReference>
<dbReference type="GO" id="GO:0010717">
    <property type="term" value="P:regulation of epithelial to mesenchymal transition"/>
    <property type="evidence" value="ECO:0000250"/>
    <property type="project" value="UniProtKB"/>
</dbReference>
<dbReference type="GO" id="GO:0051893">
    <property type="term" value="P:regulation of focal adhesion assembly"/>
    <property type="evidence" value="ECO:0000250"/>
    <property type="project" value="UniProtKB"/>
</dbReference>
<dbReference type="GO" id="GO:0043087">
    <property type="term" value="P:regulation of GTPase activity"/>
    <property type="evidence" value="ECO:0000250"/>
    <property type="project" value="UniProtKB"/>
</dbReference>
<dbReference type="GO" id="GO:0070507">
    <property type="term" value="P:regulation of microtubule cytoskeleton organization"/>
    <property type="evidence" value="ECO:0000250"/>
    <property type="project" value="UniProtKB"/>
</dbReference>
<dbReference type="CDD" id="cd10473">
    <property type="entry name" value="EphR_LBD_A"/>
    <property type="match status" value="1"/>
</dbReference>
<dbReference type="CDD" id="cd00063">
    <property type="entry name" value="FN3"/>
    <property type="match status" value="2"/>
</dbReference>
<dbReference type="CDD" id="cd05066">
    <property type="entry name" value="PTKc_EphR_A"/>
    <property type="match status" value="1"/>
</dbReference>
<dbReference type="CDD" id="cd09488">
    <property type="entry name" value="SAM_EPH-R"/>
    <property type="match status" value="1"/>
</dbReference>
<dbReference type="FunFam" id="2.60.40.10:FF:000041">
    <property type="entry name" value="ephrin type-A receptor 3"/>
    <property type="match status" value="1"/>
</dbReference>
<dbReference type="FunFam" id="1.10.150.50:FF:000001">
    <property type="entry name" value="Ephrin type-A receptor 5"/>
    <property type="match status" value="1"/>
</dbReference>
<dbReference type="FunFam" id="1.10.510.10:FF:000019">
    <property type="entry name" value="Ephrin type-A receptor 5"/>
    <property type="match status" value="1"/>
</dbReference>
<dbReference type="FunFam" id="2.10.50.10:FF:000001">
    <property type="entry name" value="Ephrin type-A receptor 5"/>
    <property type="match status" value="1"/>
</dbReference>
<dbReference type="FunFam" id="2.60.40.1770:FF:000001">
    <property type="entry name" value="Ephrin type-A receptor 5"/>
    <property type="match status" value="1"/>
</dbReference>
<dbReference type="FunFam" id="3.30.200.20:FF:000001">
    <property type="entry name" value="Ephrin type-A receptor 5"/>
    <property type="match status" value="1"/>
</dbReference>
<dbReference type="FunFam" id="2.60.120.260:FF:000001">
    <property type="entry name" value="Ephrin type-A receptor 7"/>
    <property type="match status" value="1"/>
</dbReference>
<dbReference type="Gene3D" id="2.60.40.1770">
    <property type="entry name" value="ephrin a2 ectodomain"/>
    <property type="match status" value="1"/>
</dbReference>
<dbReference type="Gene3D" id="2.60.120.260">
    <property type="entry name" value="Galactose-binding domain-like"/>
    <property type="match status" value="1"/>
</dbReference>
<dbReference type="Gene3D" id="2.60.40.10">
    <property type="entry name" value="Immunoglobulins"/>
    <property type="match status" value="2"/>
</dbReference>
<dbReference type="Gene3D" id="3.30.200.20">
    <property type="entry name" value="Phosphorylase Kinase, domain 1"/>
    <property type="match status" value="1"/>
</dbReference>
<dbReference type="Gene3D" id="1.10.150.50">
    <property type="entry name" value="Transcription Factor, Ets-1"/>
    <property type="match status" value="1"/>
</dbReference>
<dbReference type="Gene3D" id="1.10.510.10">
    <property type="entry name" value="Transferase(Phosphotransferase) domain 1"/>
    <property type="match status" value="1"/>
</dbReference>
<dbReference type="Gene3D" id="2.10.50.10">
    <property type="entry name" value="Tumor Necrosis Factor Receptor, subunit A, domain 2"/>
    <property type="match status" value="1"/>
</dbReference>
<dbReference type="InterPro" id="IPR027936">
    <property type="entry name" value="Eph_TM"/>
</dbReference>
<dbReference type="InterPro" id="IPR001090">
    <property type="entry name" value="Ephrin_rcpt_lig-bd_dom"/>
</dbReference>
<dbReference type="InterPro" id="IPR050449">
    <property type="entry name" value="Ephrin_rcpt_TKs"/>
</dbReference>
<dbReference type="InterPro" id="IPR003961">
    <property type="entry name" value="FN3_dom"/>
</dbReference>
<dbReference type="InterPro" id="IPR036116">
    <property type="entry name" value="FN3_sf"/>
</dbReference>
<dbReference type="InterPro" id="IPR008979">
    <property type="entry name" value="Galactose-bd-like_sf"/>
</dbReference>
<dbReference type="InterPro" id="IPR009030">
    <property type="entry name" value="Growth_fac_rcpt_cys_sf"/>
</dbReference>
<dbReference type="InterPro" id="IPR013783">
    <property type="entry name" value="Ig-like_fold"/>
</dbReference>
<dbReference type="InterPro" id="IPR011009">
    <property type="entry name" value="Kinase-like_dom_sf"/>
</dbReference>
<dbReference type="InterPro" id="IPR000719">
    <property type="entry name" value="Prot_kinase_dom"/>
</dbReference>
<dbReference type="InterPro" id="IPR017441">
    <property type="entry name" value="Protein_kinase_ATP_BS"/>
</dbReference>
<dbReference type="InterPro" id="IPR001660">
    <property type="entry name" value="SAM"/>
</dbReference>
<dbReference type="InterPro" id="IPR013761">
    <property type="entry name" value="SAM/pointed_sf"/>
</dbReference>
<dbReference type="InterPro" id="IPR001245">
    <property type="entry name" value="Ser-Thr/Tyr_kinase_cat_dom"/>
</dbReference>
<dbReference type="InterPro" id="IPR008266">
    <property type="entry name" value="Tyr_kinase_AS"/>
</dbReference>
<dbReference type="InterPro" id="IPR020635">
    <property type="entry name" value="Tyr_kinase_cat_dom"/>
</dbReference>
<dbReference type="InterPro" id="IPR016257">
    <property type="entry name" value="Tyr_kinase_ephrin_rcpt"/>
</dbReference>
<dbReference type="InterPro" id="IPR001426">
    <property type="entry name" value="Tyr_kinase_rcpt_V_CS"/>
</dbReference>
<dbReference type="PANTHER" id="PTHR46877">
    <property type="entry name" value="EPH RECEPTOR A5"/>
    <property type="match status" value="1"/>
</dbReference>
<dbReference type="PANTHER" id="PTHR46877:SF8">
    <property type="entry name" value="RECEPTOR PROTEIN-TYROSINE KINASE"/>
    <property type="match status" value="1"/>
</dbReference>
<dbReference type="Pfam" id="PF14575">
    <property type="entry name" value="EphA2_TM"/>
    <property type="match status" value="1"/>
</dbReference>
<dbReference type="Pfam" id="PF01404">
    <property type="entry name" value="Ephrin_lbd"/>
    <property type="match status" value="1"/>
</dbReference>
<dbReference type="Pfam" id="PF00041">
    <property type="entry name" value="fn3"/>
    <property type="match status" value="2"/>
</dbReference>
<dbReference type="Pfam" id="PF07714">
    <property type="entry name" value="PK_Tyr_Ser-Thr"/>
    <property type="match status" value="1"/>
</dbReference>
<dbReference type="Pfam" id="PF00536">
    <property type="entry name" value="SAM_1"/>
    <property type="match status" value="1"/>
</dbReference>
<dbReference type="PIRSF" id="PIRSF000666">
    <property type="entry name" value="TyrPK_ephrin_receptor"/>
    <property type="match status" value="1"/>
</dbReference>
<dbReference type="PRINTS" id="PR00014">
    <property type="entry name" value="FNTYPEIII"/>
</dbReference>
<dbReference type="PRINTS" id="PR00109">
    <property type="entry name" value="TYRKINASE"/>
</dbReference>
<dbReference type="SMART" id="SM00615">
    <property type="entry name" value="EPH_lbd"/>
    <property type="match status" value="1"/>
</dbReference>
<dbReference type="SMART" id="SM01411">
    <property type="entry name" value="Ephrin_rec_like"/>
    <property type="match status" value="1"/>
</dbReference>
<dbReference type="SMART" id="SM00060">
    <property type="entry name" value="FN3"/>
    <property type="match status" value="2"/>
</dbReference>
<dbReference type="SMART" id="SM00454">
    <property type="entry name" value="SAM"/>
    <property type="match status" value="1"/>
</dbReference>
<dbReference type="SMART" id="SM00219">
    <property type="entry name" value="TyrKc"/>
    <property type="match status" value="1"/>
</dbReference>
<dbReference type="SUPFAM" id="SSF49265">
    <property type="entry name" value="Fibronectin type III"/>
    <property type="match status" value="1"/>
</dbReference>
<dbReference type="SUPFAM" id="SSF49785">
    <property type="entry name" value="Galactose-binding domain-like"/>
    <property type="match status" value="1"/>
</dbReference>
<dbReference type="SUPFAM" id="SSF57184">
    <property type="entry name" value="Growth factor receptor domain"/>
    <property type="match status" value="1"/>
</dbReference>
<dbReference type="SUPFAM" id="SSF56112">
    <property type="entry name" value="Protein kinase-like (PK-like)"/>
    <property type="match status" value="1"/>
</dbReference>
<dbReference type="SUPFAM" id="SSF47769">
    <property type="entry name" value="SAM/Pointed domain"/>
    <property type="match status" value="1"/>
</dbReference>
<dbReference type="PROSITE" id="PS01186">
    <property type="entry name" value="EGF_2"/>
    <property type="match status" value="1"/>
</dbReference>
<dbReference type="PROSITE" id="PS51550">
    <property type="entry name" value="EPH_LBD"/>
    <property type="match status" value="1"/>
</dbReference>
<dbReference type="PROSITE" id="PS50853">
    <property type="entry name" value="FN3"/>
    <property type="match status" value="2"/>
</dbReference>
<dbReference type="PROSITE" id="PS00107">
    <property type="entry name" value="PROTEIN_KINASE_ATP"/>
    <property type="match status" value="1"/>
</dbReference>
<dbReference type="PROSITE" id="PS50011">
    <property type="entry name" value="PROTEIN_KINASE_DOM"/>
    <property type="match status" value="1"/>
</dbReference>
<dbReference type="PROSITE" id="PS00109">
    <property type="entry name" value="PROTEIN_KINASE_TYR"/>
    <property type="match status" value="1"/>
</dbReference>
<dbReference type="PROSITE" id="PS00790">
    <property type="entry name" value="RECEPTOR_TYR_KIN_V_1"/>
    <property type="match status" value="1"/>
</dbReference>
<dbReference type="PROSITE" id="PS00791">
    <property type="entry name" value="RECEPTOR_TYR_KIN_V_2"/>
    <property type="match status" value="1"/>
</dbReference>
<dbReference type="PROSITE" id="PS50105">
    <property type="entry name" value="SAM_DOMAIN"/>
    <property type="match status" value="1"/>
</dbReference>
<sequence>MALFRIYSFLAPFHILVLCQALRNYPDNEVTLLDSMSAPGDLGWEAYPSEGWEEISVMDERNIPMRTYQVCNVMEANQNNWLRTGLIQREGAQRVYVEIKFTLRDCNSLPGVPGTCKETFNVYYHESNNAVAAPLRHIRESQYIKIDTIAADESFTQTDVGDRVMKLNTEVRDISGLSKRGLYLAFQDLGACIALVSVRVFYKRCPLAVLNLARFPDTVTGGDSALVEVRGTCVEDAEELEGPRMFCSADGGWLVPIGRCVCRPGFEEVDGHCQPCRSGFYKASAMDAYCVKCPPHSYSHQDKASECVCERGFYRAESDPRSMACTRPPSAPGNPISMVNETAVTLEWSPPRDSGGRGDVSYSVHCRKCSGETGASERCVPCGSGAHFNPRQFGLTHPRVLVTELQPHTNYTFSVEALNGVSDLSPSPRQLVSVNVTTSQTVSVILKERKGTDSVTLAWQGPEPVDGTVVEYEVTYYEKNQQDQNYTVLKTKSNSMTVDGLKPGTTYIFRVRARTDGGYGNYKGEIELETSHEDMLAVGDPNQQTILAISVAGGAVLLVLLVACFIVSGRRCGYIKAKQDPEEEKMQFQHGRVKLPETRTYIHPHTYEDPNQAVRDFAKEIEVSNIRIERVIGAGEFGEVCSGRLRLPSKREIQVAIKSLKAGYSEHQRRDFLSEASIMGQFDHPNIIRLEGVVTRCKPVMIVTEYMENGSLDTFLKKHDGQFTVIQLLGMLRGIAAGMQYLSEMNYVHRDLAARNILVNRNLVCKVSDFGLSRVLEDDPEAAYTTRGGKIPIRWTAPEAITYRKFTSASDVWSYGIVMWEVISYGERPYWEMSNQDVIKAVDEGYRLPAPMDCPVVLHQLMLDCWEKNRSDRPKFGQIVNTLDRLIRNPSSLKQLANSAVWEDPVTPEAAVNTVEDWLDLIKMGQYKEHFSSAGYVTLDSVLYVSSSELDKMGVELAGHQKKILSSIQCLQAHHGTQVQV</sequence>
<name>EPHA3_DANRE</name>
<organism>
    <name type="scientific">Danio rerio</name>
    <name type="common">Zebrafish</name>
    <name type="synonym">Brachydanio rerio</name>
    <dbReference type="NCBI Taxonomy" id="7955"/>
    <lineage>
        <taxon>Eukaryota</taxon>
        <taxon>Metazoa</taxon>
        <taxon>Chordata</taxon>
        <taxon>Craniata</taxon>
        <taxon>Vertebrata</taxon>
        <taxon>Euteleostomi</taxon>
        <taxon>Actinopterygii</taxon>
        <taxon>Neopterygii</taxon>
        <taxon>Teleostei</taxon>
        <taxon>Ostariophysi</taxon>
        <taxon>Cypriniformes</taxon>
        <taxon>Danionidae</taxon>
        <taxon>Danioninae</taxon>
        <taxon>Danio</taxon>
    </lineage>
</organism>
<comment type="function">
    <text evidence="1">Receptor tyrosine kinase which binds promiscuously membrane-bound ephrin family ligands residing on adjacent cells, leading to contact-dependent bidirectional signaling into neighboring cells. The signaling pathway downstream of the receptor is referred to as forward signaling while the signaling pathway downstream of the ephrin ligand is referred to as reverse signaling. Highly promiscuous for ephrin-A ligands it binds preferentially efna5. Upon activation by efna5 regulates cell-cell adhesion, cytoskeletal organization and cell migration. Plays a role in cardiac cells migration and differentiation probably through activation by efna1. Involved in the retinotectal mapping of neurons. May also control the segregation but not the guidance of motor and sensory axons during neuromuscular circuit development (By similarity).</text>
</comment>
<comment type="catalytic activity">
    <reaction evidence="8">
        <text>L-tyrosyl-[protein] + ATP = O-phospho-L-tyrosyl-[protein] + ADP + H(+)</text>
        <dbReference type="Rhea" id="RHEA:10596"/>
        <dbReference type="Rhea" id="RHEA-COMP:10136"/>
        <dbReference type="Rhea" id="RHEA-COMP:20101"/>
        <dbReference type="ChEBI" id="CHEBI:15378"/>
        <dbReference type="ChEBI" id="CHEBI:30616"/>
        <dbReference type="ChEBI" id="CHEBI:46858"/>
        <dbReference type="ChEBI" id="CHEBI:61978"/>
        <dbReference type="ChEBI" id="CHEBI:456216"/>
        <dbReference type="EC" id="2.7.10.1"/>
    </reaction>
</comment>
<comment type="subunit">
    <text evidence="1">Heterotetramer upon binding of the ligand. The heterotetramer is composed of an ephrin dimer and a receptor dimer. Oligomerization is probably required to induce biological responses (By similarity).</text>
</comment>
<comment type="interaction">
    <interactant intactId="EBI-42473062">
        <id>O13146</id>
    </interactant>
    <interactant intactId="EBI-42473106">
        <id>P79727</id>
        <label>efna2</label>
    </interactant>
    <organismsDiffer>false</organismsDiffer>
    <experiments>2</experiments>
</comment>
<comment type="interaction">
    <interactant intactId="EBI-42473062">
        <id>O13146</id>
    </interactant>
    <interactant intactId="EBI-42473207">
        <id>Q90YC5</id>
        <label>efna3b</label>
    </interactant>
    <organismsDiffer>false</organismsDiffer>
    <experiments>2</experiments>
</comment>
<comment type="interaction">
    <interactant intactId="EBI-42473062">
        <id>O13146</id>
    </interactant>
    <interactant intactId="EBI-42473236">
        <id>P79728</id>
        <label>efna5b</label>
    </interactant>
    <organismsDiffer>false</organismsDiffer>
    <experiments>2</experiments>
</comment>
<comment type="interaction">
    <interactant intactId="EBI-42473062">
        <id>O13146</id>
    </interactant>
    <interactant intactId="EBI-42473274">
        <id>O73874</id>
        <label>efnb2a</label>
    </interactant>
    <organismsDiffer>false</organismsDiffer>
    <experiments>2</experiments>
</comment>
<comment type="interaction">
    <interactant intactId="EBI-42473062">
        <id>O13146</id>
    </interactant>
    <interactant intactId="EBI-42477337">
        <id>Q90Z31</id>
        <label>efnb3b</label>
    </interactant>
    <organismsDiffer>false</organismsDiffer>
    <experiments>2</experiments>
</comment>
<comment type="interaction">
    <interactant intactId="EBI-42473062">
        <id>O13146</id>
    </interactant>
    <interactant intactId="EBI-42477359">
        <id>A0A8M1NF77</id>
        <label>wfdc1</label>
    </interactant>
    <organismsDiffer>false</organismsDiffer>
    <experiments>2</experiments>
</comment>
<comment type="subcellular location">
    <subcellularLocation>
        <location evidence="2">Cell membrane</location>
        <topology evidence="3">Single-pass type I membrane protein</topology>
    </subcellularLocation>
</comment>
<comment type="tissue specificity">
    <text>Widely expressed in the developing zebrafish nervous system.</text>
</comment>
<comment type="PTM">
    <text evidence="1">Autophosphorylates upon activation by efna5.</text>
</comment>
<comment type="similarity">
    <text evidence="4">Belongs to the protein kinase superfamily. Tyr protein kinase family. Ephrin receptor subfamily.</text>
</comment>
<protein>
    <recommendedName>
        <fullName>Ephrin type-A receptor 3</fullName>
        <ecNumber>2.7.10.1</ecNumber>
    </recommendedName>
    <alternativeName>
        <fullName>EPH-like kinase 1</fullName>
    </alternativeName>
    <alternativeName>
        <fullName>Tyrosine-protein kinase receptor ZEK1</fullName>
    </alternativeName>
</protein>
<gene>
    <name type="primary">epha3</name>
    <name type="synonym">ek1</name>
    <name type="synonym">zek1</name>
</gene>
<accession>O13146</accession>
<evidence type="ECO:0000250" key="1"/>
<evidence type="ECO:0000250" key="2">
    <source>
        <dbReference type="UniProtKB" id="P29320"/>
    </source>
</evidence>
<evidence type="ECO:0000255" key="3"/>
<evidence type="ECO:0000255" key="4">
    <source>
        <dbReference type="PROSITE-ProRule" id="PRU00159"/>
    </source>
</evidence>
<evidence type="ECO:0000255" key="5">
    <source>
        <dbReference type="PROSITE-ProRule" id="PRU00184"/>
    </source>
</evidence>
<evidence type="ECO:0000255" key="6">
    <source>
        <dbReference type="PROSITE-ProRule" id="PRU00316"/>
    </source>
</evidence>
<evidence type="ECO:0000255" key="7">
    <source>
        <dbReference type="PROSITE-ProRule" id="PRU00883"/>
    </source>
</evidence>
<evidence type="ECO:0000255" key="8">
    <source>
        <dbReference type="PROSITE-ProRule" id="PRU10028"/>
    </source>
</evidence>
<reference key="1">
    <citation type="journal article" date="1997" name="Dev. Dyn.">
        <title>Novel Eph-family receptor tyrosine kinase is widely expressed in the developing zebrafish nervous system.</title>
        <authorList>
            <person name="Bovenkamp D.E."/>
            <person name="Greer P."/>
        </authorList>
    </citation>
    <scope>NUCLEOTIDE SEQUENCE [MRNA]</scope>
</reference>
<proteinExistence type="evidence at protein level"/>
<keyword id="KW-0067">ATP-binding</keyword>
<keyword id="KW-1003">Cell membrane</keyword>
<keyword id="KW-0325">Glycoprotein</keyword>
<keyword id="KW-0418">Kinase</keyword>
<keyword id="KW-0472">Membrane</keyword>
<keyword id="KW-0547">Nucleotide-binding</keyword>
<keyword id="KW-0597">Phosphoprotein</keyword>
<keyword id="KW-0675">Receptor</keyword>
<keyword id="KW-1185">Reference proteome</keyword>
<keyword id="KW-0677">Repeat</keyword>
<keyword id="KW-0732">Signal</keyword>
<keyword id="KW-0808">Transferase</keyword>
<keyword id="KW-0812">Transmembrane</keyword>
<keyword id="KW-1133">Transmembrane helix</keyword>
<keyword id="KW-0829">Tyrosine-protein kinase</keyword>
<feature type="signal peptide" evidence="1">
    <location>
        <begin position="1"/>
        <end position="20"/>
    </location>
</feature>
<feature type="chain" id="PRO_0000016806" description="Ephrin type-A receptor 3">
    <location>
        <begin position="21"/>
        <end position="981"/>
    </location>
</feature>
<feature type="topological domain" description="Extracellular" evidence="3">
    <location>
        <begin position="21"/>
        <end position="545"/>
    </location>
</feature>
<feature type="transmembrane region" description="Helical" evidence="3">
    <location>
        <begin position="546"/>
        <end position="566"/>
    </location>
</feature>
<feature type="topological domain" description="Cytoplasmic" evidence="3">
    <location>
        <begin position="567"/>
        <end position="981"/>
    </location>
</feature>
<feature type="domain" description="Eph LBD" evidence="7">
    <location>
        <begin position="29"/>
        <end position="210"/>
    </location>
</feature>
<feature type="domain" description="Fibronectin type-III 1" evidence="6">
    <location>
        <begin position="328"/>
        <end position="441"/>
    </location>
</feature>
<feature type="domain" description="Fibronectin type-III 2" evidence="6">
    <location>
        <begin position="442"/>
        <end position="533"/>
    </location>
</feature>
<feature type="domain" description="Protein kinase" evidence="4">
    <location>
        <begin position="626"/>
        <end position="887"/>
    </location>
</feature>
<feature type="domain" description="SAM" evidence="5">
    <location>
        <begin position="910"/>
        <end position="974"/>
    </location>
</feature>
<feature type="short sequence motif" description="PDZ-binding" evidence="3">
    <location>
        <begin position="979"/>
        <end position="981"/>
    </location>
</feature>
<feature type="active site" description="Proton acceptor" evidence="4 8">
    <location>
        <position position="751"/>
    </location>
</feature>
<feature type="binding site" evidence="4">
    <location>
        <begin position="633"/>
        <end position="638"/>
    </location>
    <ligand>
        <name>ATP</name>
        <dbReference type="ChEBI" id="CHEBI:30616"/>
    </ligand>
</feature>
<feature type="binding site" evidence="4">
    <location>
        <position position="658"/>
    </location>
    <ligand>
        <name>ATP</name>
        <dbReference type="ChEBI" id="CHEBI:30616"/>
    </ligand>
</feature>
<feature type="binding site" evidence="4">
    <location>
        <begin position="705"/>
        <end position="711"/>
    </location>
    <ligand>
        <name>ATP</name>
        <dbReference type="ChEBI" id="CHEBI:30616"/>
    </ligand>
</feature>
<feature type="binding site" evidence="4">
    <location>
        <begin position="755"/>
        <end position="756"/>
    </location>
    <ligand>
        <name>ATP</name>
        <dbReference type="ChEBI" id="CHEBI:30616"/>
    </ligand>
</feature>
<feature type="modified residue" description="Phosphotyrosine; by autocatalysis" evidence="1">
    <location>
        <position position="601"/>
    </location>
</feature>
<feature type="modified residue" description="Phosphotyrosine; by autocatalysis" evidence="1">
    <location>
        <position position="607"/>
    </location>
</feature>
<feature type="modified residue" description="Phosphotyrosine; by autocatalysis" evidence="1">
    <location>
        <position position="706"/>
    </location>
</feature>
<feature type="modified residue" description="Phosphotyrosine; by autocatalysis" evidence="3">
    <location>
        <position position="784"/>
    </location>
</feature>
<feature type="modified residue" description="Phosphotyrosine; by autocatalysis" evidence="3">
    <location>
        <position position="927"/>
    </location>
</feature>
<feature type="glycosylation site" description="N-linked (GlcNAc...) asparagine" evidence="3">
    <location>
        <position position="340"/>
    </location>
</feature>
<feature type="glycosylation site" description="N-linked (GlcNAc...) asparagine" evidence="3">
    <location>
        <position position="410"/>
    </location>
</feature>
<feature type="glycosylation site" description="N-linked (GlcNAc...) asparagine" evidence="3">
    <location>
        <position position="435"/>
    </location>
</feature>
<feature type="glycosylation site" description="N-linked (GlcNAc...) asparagine" evidence="3">
    <location>
        <position position="485"/>
    </location>
</feature>
<feature type="sequence variant">
    <original>S</original>
    <variation>N</variation>
    <location>
        <position position="141"/>
    </location>
</feature>